<gene>
    <name type="primary">ywpE</name>
    <name type="ordered locus">BSU36340</name>
</gene>
<protein>
    <recommendedName>
        <fullName evidence="5">Putative sortase YwpE</fullName>
        <ecNumber evidence="1">3.4.22.-</ecNumber>
    </recommendedName>
</protein>
<feature type="chain" id="PRO_0000390896" description="Putative sortase YwpE">
    <location>
        <begin position="1"/>
        <end position="102"/>
    </location>
</feature>
<feature type="active site" description="Proton donor/acceptor" evidence="2">
    <location>
        <position position="17"/>
    </location>
</feature>
<feature type="active site" description="Acyl-thioester intermediate" evidence="2">
    <location>
        <position position="78"/>
    </location>
</feature>
<feature type="site" description="Transition state stabilizer" evidence="2">
    <location>
        <position position="87"/>
    </location>
</feature>
<proteinExistence type="evidence at transcript level"/>
<organism>
    <name type="scientific">Bacillus subtilis (strain 168)</name>
    <dbReference type="NCBI Taxonomy" id="224308"/>
    <lineage>
        <taxon>Bacteria</taxon>
        <taxon>Bacillati</taxon>
        <taxon>Bacillota</taxon>
        <taxon>Bacilli</taxon>
        <taxon>Bacillales</taxon>
        <taxon>Bacillaceae</taxon>
        <taxon>Bacillus</taxon>
    </lineage>
</organism>
<reference key="1">
    <citation type="journal article" date="1997" name="Microbiology">
        <title>The Bacillus subtilis genome from gerBC (311 degrees) to licR (334 degrees).</title>
        <authorList>
            <person name="Presecan E."/>
            <person name="Moszer I."/>
            <person name="Boursier L."/>
            <person name="Cruz Ramos H."/>
            <person name="De La Fuente V."/>
            <person name="Hullo M.-F."/>
            <person name="Lelong C."/>
            <person name="Schleich S."/>
            <person name="Sekowska A."/>
            <person name="Song B.H."/>
            <person name="Villani G."/>
            <person name="Kunst F."/>
            <person name="Danchin A."/>
            <person name="Glaser P."/>
        </authorList>
    </citation>
    <scope>NUCLEOTIDE SEQUENCE [GENOMIC DNA]</scope>
    <source>
        <strain>168</strain>
    </source>
</reference>
<reference key="2">
    <citation type="journal article" date="1997" name="Nature">
        <title>The complete genome sequence of the Gram-positive bacterium Bacillus subtilis.</title>
        <authorList>
            <person name="Kunst F."/>
            <person name="Ogasawara N."/>
            <person name="Moszer I."/>
            <person name="Albertini A.M."/>
            <person name="Alloni G."/>
            <person name="Azevedo V."/>
            <person name="Bertero M.G."/>
            <person name="Bessieres P."/>
            <person name="Bolotin A."/>
            <person name="Borchert S."/>
            <person name="Borriss R."/>
            <person name="Boursier L."/>
            <person name="Brans A."/>
            <person name="Braun M."/>
            <person name="Brignell S.C."/>
            <person name="Bron S."/>
            <person name="Brouillet S."/>
            <person name="Bruschi C.V."/>
            <person name="Caldwell B."/>
            <person name="Capuano V."/>
            <person name="Carter N.M."/>
            <person name="Choi S.-K."/>
            <person name="Codani J.-J."/>
            <person name="Connerton I.F."/>
            <person name="Cummings N.J."/>
            <person name="Daniel R.A."/>
            <person name="Denizot F."/>
            <person name="Devine K.M."/>
            <person name="Duesterhoeft A."/>
            <person name="Ehrlich S.D."/>
            <person name="Emmerson P.T."/>
            <person name="Entian K.-D."/>
            <person name="Errington J."/>
            <person name="Fabret C."/>
            <person name="Ferrari E."/>
            <person name="Foulger D."/>
            <person name="Fritz C."/>
            <person name="Fujita M."/>
            <person name="Fujita Y."/>
            <person name="Fuma S."/>
            <person name="Galizzi A."/>
            <person name="Galleron N."/>
            <person name="Ghim S.-Y."/>
            <person name="Glaser P."/>
            <person name="Goffeau A."/>
            <person name="Golightly E.J."/>
            <person name="Grandi G."/>
            <person name="Guiseppi G."/>
            <person name="Guy B.J."/>
            <person name="Haga K."/>
            <person name="Haiech J."/>
            <person name="Harwood C.R."/>
            <person name="Henaut A."/>
            <person name="Hilbert H."/>
            <person name="Holsappel S."/>
            <person name="Hosono S."/>
            <person name="Hullo M.-F."/>
            <person name="Itaya M."/>
            <person name="Jones L.-M."/>
            <person name="Joris B."/>
            <person name="Karamata D."/>
            <person name="Kasahara Y."/>
            <person name="Klaerr-Blanchard M."/>
            <person name="Klein C."/>
            <person name="Kobayashi Y."/>
            <person name="Koetter P."/>
            <person name="Koningstein G."/>
            <person name="Krogh S."/>
            <person name="Kumano M."/>
            <person name="Kurita K."/>
            <person name="Lapidus A."/>
            <person name="Lardinois S."/>
            <person name="Lauber J."/>
            <person name="Lazarevic V."/>
            <person name="Lee S.-M."/>
            <person name="Levine A."/>
            <person name="Liu H."/>
            <person name="Masuda S."/>
            <person name="Mauel C."/>
            <person name="Medigue C."/>
            <person name="Medina N."/>
            <person name="Mellado R.P."/>
            <person name="Mizuno M."/>
            <person name="Moestl D."/>
            <person name="Nakai S."/>
            <person name="Noback M."/>
            <person name="Noone D."/>
            <person name="O'Reilly M."/>
            <person name="Ogawa K."/>
            <person name="Ogiwara A."/>
            <person name="Oudega B."/>
            <person name="Park S.-H."/>
            <person name="Parro V."/>
            <person name="Pohl T.M."/>
            <person name="Portetelle D."/>
            <person name="Porwollik S."/>
            <person name="Prescott A.M."/>
            <person name="Presecan E."/>
            <person name="Pujic P."/>
            <person name="Purnelle B."/>
            <person name="Rapoport G."/>
            <person name="Rey M."/>
            <person name="Reynolds S."/>
            <person name="Rieger M."/>
            <person name="Rivolta C."/>
            <person name="Rocha E."/>
            <person name="Roche B."/>
            <person name="Rose M."/>
            <person name="Sadaie Y."/>
            <person name="Sato T."/>
            <person name="Scanlan E."/>
            <person name="Schleich S."/>
            <person name="Schroeter R."/>
            <person name="Scoffone F."/>
            <person name="Sekiguchi J."/>
            <person name="Sekowska A."/>
            <person name="Seror S.J."/>
            <person name="Serror P."/>
            <person name="Shin B.-S."/>
            <person name="Soldo B."/>
            <person name="Sorokin A."/>
            <person name="Tacconi E."/>
            <person name="Takagi T."/>
            <person name="Takahashi H."/>
            <person name="Takemaru K."/>
            <person name="Takeuchi M."/>
            <person name="Tamakoshi A."/>
            <person name="Tanaka T."/>
            <person name="Terpstra P."/>
            <person name="Tognoni A."/>
            <person name="Tosato V."/>
            <person name="Uchiyama S."/>
            <person name="Vandenbol M."/>
            <person name="Vannier F."/>
            <person name="Vassarotti A."/>
            <person name="Viari A."/>
            <person name="Wambutt R."/>
            <person name="Wedler E."/>
            <person name="Wedler H."/>
            <person name="Weitzenegger T."/>
            <person name="Winters P."/>
            <person name="Wipat A."/>
            <person name="Yamamoto H."/>
            <person name="Yamane K."/>
            <person name="Yasumoto K."/>
            <person name="Yata K."/>
            <person name="Yoshida K."/>
            <person name="Yoshikawa H.-F."/>
            <person name="Zumstein E."/>
            <person name="Yoshikawa H."/>
            <person name="Danchin A."/>
        </authorList>
    </citation>
    <scope>NUCLEOTIDE SEQUENCE [LARGE SCALE GENOMIC DNA]</scope>
    <source>
        <strain>168</strain>
    </source>
</reference>
<reference key="3">
    <citation type="journal article" date="2011" name="AMB Express">
        <title>Analysis and application of Bacillus subtilis sortases to anchor recombinant proteins on the cell wall.</title>
        <authorList>
            <person name="Nguyen H.D."/>
            <person name="Phan T.T."/>
            <person name="Schumann W."/>
        </authorList>
    </citation>
    <scope>FUNCTION</scope>
    <scope>INDUCTION</scope>
</reference>
<reference key="4">
    <citation type="journal article" date="2011" name="Proteomics">
        <title>Functional analysis of the sortase YhcS in Bacillus subtilis.</title>
        <authorList>
            <person name="Fasehee H."/>
            <person name="Westers H."/>
            <person name="Bolhuis A."/>
            <person name="Antelmann H."/>
            <person name="Hecker M."/>
            <person name="Quax W.J."/>
            <person name="Mirlohi A.F."/>
            <person name="van Dijl J.M."/>
            <person name="Ahmadian G."/>
        </authorList>
    </citation>
    <scope>DISRUPTION PHENOTYPE</scope>
</reference>
<name>YWPE_BACSU</name>
<sequence>MRRDQKMGEGNYPLAGHHLKQKNLLFGPLENIKTGAQIVITDFKKDYIYSVTSKDIISEMDADVVEETNKKEITLITCDKAVKTEGRLVVKGELVDSFGHTN</sequence>
<dbReference type="EC" id="3.4.22.-" evidence="1"/>
<dbReference type="EMBL" id="Z83337">
    <property type="protein sequence ID" value="CAB05946.1"/>
    <property type="molecule type" value="Genomic_DNA"/>
</dbReference>
<dbReference type="EMBL" id="AL009126">
    <property type="protein sequence ID" value="CAB15651.1"/>
    <property type="molecule type" value="Genomic_DNA"/>
</dbReference>
<dbReference type="PIR" id="G70065">
    <property type="entry name" value="G70065"/>
</dbReference>
<dbReference type="RefSeq" id="NP_391515.1">
    <property type="nucleotide sequence ID" value="NC_000964.3"/>
</dbReference>
<dbReference type="RefSeq" id="WP_003227792.1">
    <property type="nucleotide sequence ID" value="NC_000964.3"/>
</dbReference>
<dbReference type="SMR" id="P94587"/>
<dbReference type="FunCoup" id="P94587">
    <property type="interactions" value="113"/>
</dbReference>
<dbReference type="STRING" id="224308.BSU36340"/>
<dbReference type="MEROPS" id="C60.A01"/>
<dbReference type="PaxDb" id="224308-BSU36340"/>
<dbReference type="EnsemblBacteria" id="CAB15651">
    <property type="protein sequence ID" value="CAB15651"/>
    <property type="gene ID" value="BSU_36340"/>
</dbReference>
<dbReference type="GeneID" id="936904"/>
<dbReference type="KEGG" id="bsu:BSU36340"/>
<dbReference type="PATRIC" id="fig|224308.179.peg.3933"/>
<dbReference type="eggNOG" id="COG3764">
    <property type="taxonomic scope" value="Bacteria"/>
</dbReference>
<dbReference type="InParanoid" id="P94587"/>
<dbReference type="OrthoDB" id="1648028at2"/>
<dbReference type="PhylomeDB" id="P94587"/>
<dbReference type="BioCyc" id="BSUB:BSU36340-MONOMER"/>
<dbReference type="Proteomes" id="UP000001570">
    <property type="component" value="Chromosome"/>
</dbReference>
<dbReference type="GO" id="GO:0008234">
    <property type="term" value="F:cysteine-type peptidase activity"/>
    <property type="evidence" value="ECO:0007669"/>
    <property type="project" value="UniProtKB-KW"/>
</dbReference>
<dbReference type="GO" id="GO:0006508">
    <property type="term" value="P:proteolysis"/>
    <property type="evidence" value="ECO:0007669"/>
    <property type="project" value="UniProtKB-KW"/>
</dbReference>
<dbReference type="CDD" id="cd06165">
    <property type="entry name" value="Sortase_A"/>
    <property type="match status" value="1"/>
</dbReference>
<dbReference type="Gene3D" id="2.40.260.10">
    <property type="entry name" value="Sortase"/>
    <property type="match status" value="1"/>
</dbReference>
<dbReference type="InterPro" id="IPR005754">
    <property type="entry name" value="Sortase"/>
</dbReference>
<dbReference type="InterPro" id="IPR042007">
    <property type="entry name" value="Sortase_A"/>
</dbReference>
<dbReference type="InterPro" id="IPR023365">
    <property type="entry name" value="Sortase_dom-sf"/>
</dbReference>
<dbReference type="NCBIfam" id="TIGR01076">
    <property type="entry name" value="sortase_fam"/>
    <property type="match status" value="1"/>
</dbReference>
<dbReference type="Pfam" id="PF04203">
    <property type="entry name" value="Sortase"/>
    <property type="match status" value="1"/>
</dbReference>
<dbReference type="SUPFAM" id="SSF63817">
    <property type="entry name" value="Sortase"/>
    <property type="match status" value="1"/>
</dbReference>
<evidence type="ECO:0000250" key="1">
    <source>
        <dbReference type="UniProtKB" id="P54603"/>
    </source>
</evidence>
<evidence type="ECO:0000250" key="2">
    <source>
        <dbReference type="UniProtKB" id="Q2FV99"/>
    </source>
</evidence>
<evidence type="ECO:0000269" key="3">
    <source>
    </source>
</evidence>
<evidence type="ECO:0000269" key="4">
    <source>
    </source>
</evidence>
<evidence type="ECO:0000305" key="5"/>
<evidence type="ECO:0000305" key="6">
    <source>
    </source>
</evidence>
<comment type="function">
    <text evidence="6">Seems not to play a major role if any as a sortase.</text>
</comment>
<comment type="induction">
    <text evidence="4">Preferentially expressed in the late stationary phase.</text>
</comment>
<comment type="disruption phenotype">
    <text evidence="3">Mutation does not affect extracellular levels of the sortase substrate YfkN.</text>
</comment>
<comment type="similarity">
    <text evidence="5">Belongs to the bacterial sortase family.</text>
</comment>
<comment type="caution">
    <text evidence="5">Compared to other sortases, it is shorter and lacks the N-terminal membrane anchor. It may lack activity.</text>
</comment>
<keyword id="KW-0378">Hydrolase</keyword>
<keyword id="KW-0645">Protease</keyword>
<keyword id="KW-1185">Reference proteome</keyword>
<keyword id="KW-0788">Thiol protease</keyword>
<accession>P94587</accession>
<accession>Q795A8</accession>